<feature type="chain" id="PRO_1000184710" description="ATP synthase subunit delta">
    <location>
        <begin position="1"/>
        <end position="177"/>
    </location>
</feature>
<accession>B7LK80</accession>
<comment type="function">
    <text evidence="1">F(1)F(0) ATP synthase produces ATP from ADP in the presence of a proton or sodium gradient. F-type ATPases consist of two structural domains, F(1) containing the extramembraneous catalytic core and F(0) containing the membrane proton channel, linked together by a central stalk and a peripheral stalk. During catalysis, ATP synthesis in the catalytic domain of F(1) is coupled via a rotary mechanism of the central stalk subunits to proton translocation.</text>
</comment>
<comment type="function">
    <text evidence="1">This protein is part of the stalk that links CF(0) to CF(1). It either transmits conformational changes from CF(0) to CF(1) or is implicated in proton conduction.</text>
</comment>
<comment type="subunit">
    <text evidence="1">F-type ATPases have 2 components, F(1) - the catalytic core - and F(0) - the membrane proton channel. F(1) has five subunits: alpha(3), beta(3), gamma(1), delta(1), epsilon(1). F(0) has three main subunits: a(1), b(2) and c(10-14). The alpha and beta chains form an alternating ring which encloses part of the gamma chain. F(1) is attached to F(0) by a central stalk formed by the gamma and epsilon chains, while a peripheral stalk is formed by the delta and b chains.</text>
</comment>
<comment type="subcellular location">
    <subcellularLocation>
        <location evidence="1">Cell inner membrane</location>
        <topology evidence="1">Peripheral membrane protein</topology>
    </subcellularLocation>
</comment>
<comment type="similarity">
    <text evidence="1">Belongs to the ATPase delta chain family.</text>
</comment>
<sequence>MSEFITVARPYAKAAFDFAVEHQSVERWQDMLAFAAEVTKNEQMAELLSGALAPETLAESFIAVCGEQLDENGQNLIRVMAENGRLNALPDVLEQFIHLRAVSEATAEVDVISAAALSEQQLAKISAAMEKRLSRKVKLNCKIDKSVMAGVIIRAGDMVIDGSVRGRLERLADVLQS</sequence>
<name>ATPD_ESCF3</name>
<gene>
    <name evidence="1" type="primary">atpH</name>
    <name type="ordered locus">EFER_4034</name>
</gene>
<reference key="1">
    <citation type="journal article" date="2009" name="PLoS Genet.">
        <title>Organised genome dynamics in the Escherichia coli species results in highly diverse adaptive paths.</title>
        <authorList>
            <person name="Touchon M."/>
            <person name="Hoede C."/>
            <person name="Tenaillon O."/>
            <person name="Barbe V."/>
            <person name="Baeriswyl S."/>
            <person name="Bidet P."/>
            <person name="Bingen E."/>
            <person name="Bonacorsi S."/>
            <person name="Bouchier C."/>
            <person name="Bouvet O."/>
            <person name="Calteau A."/>
            <person name="Chiapello H."/>
            <person name="Clermont O."/>
            <person name="Cruveiller S."/>
            <person name="Danchin A."/>
            <person name="Diard M."/>
            <person name="Dossat C."/>
            <person name="Karoui M.E."/>
            <person name="Frapy E."/>
            <person name="Garry L."/>
            <person name="Ghigo J.M."/>
            <person name="Gilles A.M."/>
            <person name="Johnson J."/>
            <person name="Le Bouguenec C."/>
            <person name="Lescat M."/>
            <person name="Mangenot S."/>
            <person name="Martinez-Jehanne V."/>
            <person name="Matic I."/>
            <person name="Nassif X."/>
            <person name="Oztas S."/>
            <person name="Petit M.A."/>
            <person name="Pichon C."/>
            <person name="Rouy Z."/>
            <person name="Ruf C.S."/>
            <person name="Schneider D."/>
            <person name="Tourret J."/>
            <person name="Vacherie B."/>
            <person name="Vallenet D."/>
            <person name="Medigue C."/>
            <person name="Rocha E.P.C."/>
            <person name="Denamur E."/>
        </authorList>
    </citation>
    <scope>NUCLEOTIDE SEQUENCE [LARGE SCALE GENOMIC DNA]</scope>
    <source>
        <strain>ATCC 35469 / DSM 13698 / BCRC 15582 / CCUG 18766 / IAM 14443 / JCM 21226 / LMG 7866 / NBRC 102419 / NCTC 12128 / CDC 0568-73</strain>
    </source>
</reference>
<keyword id="KW-0066">ATP synthesis</keyword>
<keyword id="KW-0997">Cell inner membrane</keyword>
<keyword id="KW-1003">Cell membrane</keyword>
<keyword id="KW-0139">CF(1)</keyword>
<keyword id="KW-0375">Hydrogen ion transport</keyword>
<keyword id="KW-0406">Ion transport</keyword>
<keyword id="KW-0472">Membrane</keyword>
<keyword id="KW-0813">Transport</keyword>
<evidence type="ECO:0000255" key="1">
    <source>
        <dbReference type="HAMAP-Rule" id="MF_01416"/>
    </source>
</evidence>
<proteinExistence type="inferred from homology"/>
<protein>
    <recommendedName>
        <fullName evidence="1">ATP synthase subunit delta</fullName>
    </recommendedName>
    <alternativeName>
        <fullName evidence="1">ATP synthase F(1) sector subunit delta</fullName>
    </alternativeName>
    <alternativeName>
        <fullName evidence="1">F-type ATPase subunit delta</fullName>
        <shortName evidence="1">F-ATPase subunit delta</shortName>
    </alternativeName>
</protein>
<organism>
    <name type="scientific">Escherichia fergusonii (strain ATCC 35469 / DSM 13698 / CCUG 18766 / IAM 14443 / JCM 21226 / LMG 7866 / NBRC 102419 / NCTC 12128 / CDC 0568-73)</name>
    <dbReference type="NCBI Taxonomy" id="585054"/>
    <lineage>
        <taxon>Bacteria</taxon>
        <taxon>Pseudomonadati</taxon>
        <taxon>Pseudomonadota</taxon>
        <taxon>Gammaproteobacteria</taxon>
        <taxon>Enterobacterales</taxon>
        <taxon>Enterobacteriaceae</taxon>
        <taxon>Escherichia</taxon>
    </lineage>
</organism>
<dbReference type="EMBL" id="CU928158">
    <property type="protein sequence ID" value="CAQ91468.1"/>
    <property type="molecule type" value="Genomic_DNA"/>
</dbReference>
<dbReference type="RefSeq" id="WP_001288587.1">
    <property type="nucleotide sequence ID" value="NC_011740.1"/>
</dbReference>
<dbReference type="SMR" id="B7LK80"/>
<dbReference type="GeneID" id="93778232"/>
<dbReference type="KEGG" id="efe:EFER_4034"/>
<dbReference type="HOGENOM" id="CLU_085114_3_0_6"/>
<dbReference type="OrthoDB" id="9816221at2"/>
<dbReference type="Proteomes" id="UP000000745">
    <property type="component" value="Chromosome"/>
</dbReference>
<dbReference type="GO" id="GO:0005886">
    <property type="term" value="C:plasma membrane"/>
    <property type="evidence" value="ECO:0007669"/>
    <property type="project" value="UniProtKB-SubCell"/>
</dbReference>
<dbReference type="GO" id="GO:0045259">
    <property type="term" value="C:proton-transporting ATP synthase complex"/>
    <property type="evidence" value="ECO:0007669"/>
    <property type="project" value="UniProtKB-KW"/>
</dbReference>
<dbReference type="GO" id="GO:0046933">
    <property type="term" value="F:proton-transporting ATP synthase activity, rotational mechanism"/>
    <property type="evidence" value="ECO:0007669"/>
    <property type="project" value="UniProtKB-UniRule"/>
</dbReference>
<dbReference type="FunFam" id="1.10.520.20:FF:000001">
    <property type="entry name" value="ATP synthase subunit delta"/>
    <property type="match status" value="1"/>
</dbReference>
<dbReference type="Gene3D" id="1.10.520.20">
    <property type="entry name" value="N-terminal domain of the delta subunit of the F1F0-ATP synthase"/>
    <property type="match status" value="1"/>
</dbReference>
<dbReference type="HAMAP" id="MF_01416">
    <property type="entry name" value="ATP_synth_delta_bact"/>
    <property type="match status" value="1"/>
</dbReference>
<dbReference type="InterPro" id="IPR026015">
    <property type="entry name" value="ATP_synth_OSCP/delta_N_sf"/>
</dbReference>
<dbReference type="InterPro" id="IPR020781">
    <property type="entry name" value="ATPase_OSCP/d_CS"/>
</dbReference>
<dbReference type="InterPro" id="IPR000711">
    <property type="entry name" value="ATPase_OSCP/dsu"/>
</dbReference>
<dbReference type="NCBIfam" id="TIGR01145">
    <property type="entry name" value="ATP_synt_delta"/>
    <property type="match status" value="1"/>
</dbReference>
<dbReference type="NCBIfam" id="NF004402">
    <property type="entry name" value="PRK05758.2-2"/>
    <property type="match status" value="1"/>
</dbReference>
<dbReference type="NCBIfam" id="NF004404">
    <property type="entry name" value="PRK05758.2-5"/>
    <property type="match status" value="1"/>
</dbReference>
<dbReference type="PANTHER" id="PTHR11910">
    <property type="entry name" value="ATP SYNTHASE DELTA CHAIN"/>
    <property type="match status" value="1"/>
</dbReference>
<dbReference type="Pfam" id="PF00213">
    <property type="entry name" value="OSCP"/>
    <property type="match status" value="1"/>
</dbReference>
<dbReference type="PRINTS" id="PR00125">
    <property type="entry name" value="ATPASEDELTA"/>
</dbReference>
<dbReference type="SUPFAM" id="SSF47928">
    <property type="entry name" value="N-terminal domain of the delta subunit of the F1F0-ATP synthase"/>
    <property type="match status" value="1"/>
</dbReference>
<dbReference type="PROSITE" id="PS00389">
    <property type="entry name" value="ATPASE_DELTA"/>
    <property type="match status" value="1"/>
</dbReference>